<evidence type="ECO:0000255" key="1">
    <source>
        <dbReference type="HAMAP-Rule" id="MF_00089"/>
    </source>
</evidence>
<keyword id="KW-0004">4Fe-4S</keyword>
<keyword id="KW-0408">Iron</keyword>
<keyword id="KW-0411">Iron-sulfur</keyword>
<keyword id="KW-0456">Lyase</keyword>
<keyword id="KW-0479">Metal-binding</keyword>
<keyword id="KW-1185">Reference proteome</keyword>
<keyword id="KW-0949">S-adenosyl-L-methionine</keyword>
<keyword id="KW-0784">Thiamine biosynthesis</keyword>
<keyword id="KW-0862">Zinc</keyword>
<sequence>MSATKLTRREQRAQAQHFIDTLEGSAFPNSKRIYITGTHPGVRVPMREIQLSPTLIGGSKEQPQYEENEAIPVYDTSGPYGDPQIAINVQQGLAKLRQPWIDARGDTEELTVRSSDYTKARLADDGLDELRFSGVLTPKRAKAGHRVTQLHYARKGIITPEMEFIAIRENMGRERIRSEVLRHQHPGMSFGARLPENITAEFVRDEVAAGRAIIPANINHPESEPMIIGRNFLVKVNANIGNSAVTSSIEEEVEKLVWSTRWGADTVMDLSTGRYIHETREWILRNSPVPIGTVPIYQALEKVNGIAEDLTWEVFRDTLLEQAEQGVDYFTIHAGVLLRYVPMTAKRLTGIVSRGGSIMAKWCLSHHQENFLYQRFREICEICAAYDVSLSLGDGLRPGSIQDANDEAQFAELHTLGELTKIAWEYDVQVMIEGPGHVPMQMIRRNMTEELEHCHEAPFYTLGPLTTDIAPGYDHFTSGIGAAMIGWFGCAMLCYVTPKEHLGLPNKEDVKQGLITYKIAAHAADLAKGHPGAQIRDNAMSKARFEFRWEDQFNLALDPFTARAYHDETLPQESGKVAHFCSMCGPKFCSMKISQEVRDYAAAQTIEVGMADMSENFRARGGEIYLRKEEA</sequence>
<protein>
    <recommendedName>
        <fullName evidence="1">Phosphomethylpyrimidine synthase</fullName>
        <ecNumber evidence="1">4.1.99.17</ecNumber>
    </recommendedName>
    <alternativeName>
        <fullName evidence="1">Hydroxymethylpyrimidine phosphate synthase</fullName>
        <shortName evidence="1">HMP-P synthase</shortName>
        <shortName evidence="1">HMP-phosphate synthase</shortName>
        <shortName evidence="1">HMPP synthase</shortName>
    </alternativeName>
    <alternativeName>
        <fullName evidence="1">Thiamine biosynthesis protein ThiC</fullName>
    </alternativeName>
</protein>
<name>THIC_ECOK1</name>
<gene>
    <name evidence="1" type="primary">thiC</name>
    <name type="ordered locus">Ecok1_39610</name>
    <name type="ORF">APECO1_2481</name>
</gene>
<organism>
    <name type="scientific">Escherichia coli O1:K1 / APEC</name>
    <dbReference type="NCBI Taxonomy" id="405955"/>
    <lineage>
        <taxon>Bacteria</taxon>
        <taxon>Pseudomonadati</taxon>
        <taxon>Pseudomonadota</taxon>
        <taxon>Gammaproteobacteria</taxon>
        <taxon>Enterobacterales</taxon>
        <taxon>Enterobacteriaceae</taxon>
        <taxon>Escherichia</taxon>
    </lineage>
</organism>
<comment type="function">
    <text evidence="1">Catalyzes the synthesis of the hydroxymethylpyrimidine phosphate (HMP-P) moiety of thiamine from aminoimidazole ribotide (AIR) in a radical S-adenosyl-L-methionine (SAM)-dependent reaction.</text>
</comment>
<comment type="catalytic activity">
    <reaction evidence="1">
        <text>5-amino-1-(5-phospho-beta-D-ribosyl)imidazole + S-adenosyl-L-methionine = 4-amino-2-methyl-5-(phosphooxymethyl)pyrimidine + CO + 5'-deoxyadenosine + formate + L-methionine + 3 H(+)</text>
        <dbReference type="Rhea" id="RHEA:24840"/>
        <dbReference type="ChEBI" id="CHEBI:15378"/>
        <dbReference type="ChEBI" id="CHEBI:15740"/>
        <dbReference type="ChEBI" id="CHEBI:17245"/>
        <dbReference type="ChEBI" id="CHEBI:17319"/>
        <dbReference type="ChEBI" id="CHEBI:57844"/>
        <dbReference type="ChEBI" id="CHEBI:58354"/>
        <dbReference type="ChEBI" id="CHEBI:59789"/>
        <dbReference type="ChEBI" id="CHEBI:137981"/>
        <dbReference type="EC" id="4.1.99.17"/>
    </reaction>
</comment>
<comment type="cofactor">
    <cofactor evidence="1">
        <name>[4Fe-4S] cluster</name>
        <dbReference type="ChEBI" id="CHEBI:49883"/>
    </cofactor>
    <text evidence="1">Binds 1 [4Fe-4S] cluster per subunit. The cluster is coordinated with 3 cysteines and an exchangeable S-adenosyl-L-methionine.</text>
</comment>
<comment type="pathway">
    <text evidence="1">Cofactor biosynthesis; thiamine diphosphate biosynthesis.</text>
</comment>
<comment type="subunit">
    <text evidence="1">Homodimer.</text>
</comment>
<comment type="similarity">
    <text evidence="1">Belongs to the ThiC family.</text>
</comment>
<feature type="chain" id="PRO_1000004758" description="Phosphomethylpyrimidine synthase">
    <location>
        <begin position="1"/>
        <end position="631"/>
    </location>
</feature>
<feature type="binding site" evidence="1">
    <location>
        <position position="239"/>
    </location>
    <ligand>
        <name>substrate</name>
    </ligand>
</feature>
<feature type="binding site" evidence="1">
    <location>
        <position position="268"/>
    </location>
    <ligand>
        <name>substrate</name>
    </ligand>
</feature>
<feature type="binding site" evidence="1">
    <location>
        <position position="297"/>
    </location>
    <ligand>
        <name>substrate</name>
    </ligand>
</feature>
<feature type="binding site" evidence="1">
    <location>
        <position position="333"/>
    </location>
    <ligand>
        <name>substrate</name>
    </ligand>
</feature>
<feature type="binding site" evidence="1">
    <location>
        <begin position="353"/>
        <end position="355"/>
    </location>
    <ligand>
        <name>substrate</name>
    </ligand>
</feature>
<feature type="binding site" evidence="1">
    <location>
        <begin position="394"/>
        <end position="397"/>
    </location>
    <ligand>
        <name>substrate</name>
    </ligand>
</feature>
<feature type="binding site" evidence="1">
    <location>
        <position position="433"/>
    </location>
    <ligand>
        <name>substrate</name>
    </ligand>
</feature>
<feature type="binding site" evidence="1">
    <location>
        <position position="437"/>
    </location>
    <ligand>
        <name>Zn(2+)</name>
        <dbReference type="ChEBI" id="CHEBI:29105"/>
    </ligand>
</feature>
<feature type="binding site" evidence="1">
    <location>
        <position position="460"/>
    </location>
    <ligand>
        <name>substrate</name>
    </ligand>
</feature>
<feature type="binding site" evidence="1">
    <location>
        <position position="501"/>
    </location>
    <ligand>
        <name>Zn(2+)</name>
        <dbReference type="ChEBI" id="CHEBI:29105"/>
    </ligand>
</feature>
<feature type="binding site" evidence="1">
    <location>
        <position position="581"/>
    </location>
    <ligand>
        <name>[4Fe-4S] cluster</name>
        <dbReference type="ChEBI" id="CHEBI:49883"/>
        <note>4Fe-4S-S-AdoMet</note>
    </ligand>
</feature>
<feature type="binding site" evidence="1">
    <location>
        <position position="584"/>
    </location>
    <ligand>
        <name>[4Fe-4S] cluster</name>
        <dbReference type="ChEBI" id="CHEBI:49883"/>
        <note>4Fe-4S-S-AdoMet</note>
    </ligand>
</feature>
<feature type="binding site" evidence="1">
    <location>
        <position position="589"/>
    </location>
    <ligand>
        <name>[4Fe-4S] cluster</name>
        <dbReference type="ChEBI" id="CHEBI:49883"/>
        <note>4Fe-4S-S-AdoMet</note>
    </ligand>
</feature>
<dbReference type="EC" id="4.1.99.17" evidence="1"/>
<dbReference type="EMBL" id="CP000468">
    <property type="protein sequence ID" value="ABJ03455.1"/>
    <property type="molecule type" value="Genomic_DNA"/>
</dbReference>
<dbReference type="RefSeq" id="WP_001331778.1">
    <property type="nucleotide sequence ID" value="NZ_CADILS010000053.1"/>
</dbReference>
<dbReference type="SMR" id="A1AIG5"/>
<dbReference type="KEGG" id="ecv:APECO1_2481"/>
<dbReference type="HOGENOM" id="CLU_013181_2_1_6"/>
<dbReference type="UniPathway" id="UPA00060"/>
<dbReference type="Proteomes" id="UP000008216">
    <property type="component" value="Chromosome"/>
</dbReference>
<dbReference type="GO" id="GO:0005829">
    <property type="term" value="C:cytosol"/>
    <property type="evidence" value="ECO:0007669"/>
    <property type="project" value="TreeGrafter"/>
</dbReference>
<dbReference type="GO" id="GO:0051539">
    <property type="term" value="F:4 iron, 4 sulfur cluster binding"/>
    <property type="evidence" value="ECO:0007669"/>
    <property type="project" value="UniProtKB-KW"/>
</dbReference>
<dbReference type="GO" id="GO:0016830">
    <property type="term" value="F:carbon-carbon lyase activity"/>
    <property type="evidence" value="ECO:0007669"/>
    <property type="project" value="InterPro"/>
</dbReference>
<dbReference type="GO" id="GO:0008270">
    <property type="term" value="F:zinc ion binding"/>
    <property type="evidence" value="ECO:0007669"/>
    <property type="project" value="UniProtKB-UniRule"/>
</dbReference>
<dbReference type="GO" id="GO:0009228">
    <property type="term" value="P:thiamine biosynthetic process"/>
    <property type="evidence" value="ECO:0007669"/>
    <property type="project" value="UniProtKB-KW"/>
</dbReference>
<dbReference type="GO" id="GO:0009229">
    <property type="term" value="P:thiamine diphosphate biosynthetic process"/>
    <property type="evidence" value="ECO:0007669"/>
    <property type="project" value="UniProtKB-UniRule"/>
</dbReference>
<dbReference type="FunFam" id="3.20.20.540:FF:000001">
    <property type="entry name" value="Phosphomethylpyrimidine synthase"/>
    <property type="match status" value="1"/>
</dbReference>
<dbReference type="Gene3D" id="6.10.250.620">
    <property type="match status" value="1"/>
</dbReference>
<dbReference type="Gene3D" id="3.20.20.540">
    <property type="entry name" value="Radical SAM ThiC family, central domain"/>
    <property type="match status" value="1"/>
</dbReference>
<dbReference type="HAMAP" id="MF_00089">
    <property type="entry name" value="ThiC"/>
    <property type="match status" value="1"/>
</dbReference>
<dbReference type="InterPro" id="IPR037509">
    <property type="entry name" value="ThiC"/>
</dbReference>
<dbReference type="InterPro" id="IPR025747">
    <property type="entry name" value="ThiC-associated_dom"/>
</dbReference>
<dbReference type="InterPro" id="IPR038521">
    <property type="entry name" value="ThiC/Bza_core_dom"/>
</dbReference>
<dbReference type="InterPro" id="IPR002817">
    <property type="entry name" value="ThiC/BzaA/B"/>
</dbReference>
<dbReference type="NCBIfam" id="NF006763">
    <property type="entry name" value="PRK09284.1"/>
    <property type="match status" value="1"/>
</dbReference>
<dbReference type="NCBIfam" id="NF009895">
    <property type="entry name" value="PRK13352.1"/>
    <property type="match status" value="1"/>
</dbReference>
<dbReference type="NCBIfam" id="TIGR00190">
    <property type="entry name" value="thiC"/>
    <property type="match status" value="1"/>
</dbReference>
<dbReference type="PANTHER" id="PTHR30557:SF1">
    <property type="entry name" value="PHOSPHOMETHYLPYRIMIDINE SYNTHASE, CHLOROPLASTIC"/>
    <property type="match status" value="1"/>
</dbReference>
<dbReference type="PANTHER" id="PTHR30557">
    <property type="entry name" value="THIAMINE BIOSYNTHESIS PROTEIN THIC"/>
    <property type="match status" value="1"/>
</dbReference>
<dbReference type="Pfam" id="PF13667">
    <property type="entry name" value="ThiC-associated"/>
    <property type="match status" value="1"/>
</dbReference>
<dbReference type="Pfam" id="PF01964">
    <property type="entry name" value="ThiC_Rad_SAM"/>
    <property type="match status" value="1"/>
</dbReference>
<dbReference type="SFLD" id="SFLDF00407">
    <property type="entry name" value="phosphomethylpyrimidine_syntha"/>
    <property type="match status" value="1"/>
</dbReference>
<dbReference type="SFLD" id="SFLDG01114">
    <property type="entry name" value="phosphomethylpyrimidine_syntha"/>
    <property type="match status" value="1"/>
</dbReference>
<dbReference type="SFLD" id="SFLDS00113">
    <property type="entry name" value="Radical_SAM_Phosphomethylpyrim"/>
    <property type="match status" value="1"/>
</dbReference>
<accession>A1AIG5</accession>
<proteinExistence type="inferred from homology"/>
<reference key="1">
    <citation type="journal article" date="2007" name="J. Bacteriol.">
        <title>The genome sequence of avian pathogenic Escherichia coli strain O1:K1:H7 shares strong similarities with human extraintestinal pathogenic E. coli genomes.</title>
        <authorList>
            <person name="Johnson T.J."/>
            <person name="Kariyawasam S."/>
            <person name="Wannemuehler Y."/>
            <person name="Mangiamele P."/>
            <person name="Johnson S.J."/>
            <person name="Doetkott C."/>
            <person name="Skyberg J.A."/>
            <person name="Lynne A.M."/>
            <person name="Johnson J.R."/>
            <person name="Nolan L.K."/>
        </authorList>
    </citation>
    <scope>NUCLEOTIDE SEQUENCE [LARGE SCALE GENOMIC DNA]</scope>
</reference>